<gene>
    <name type="primary">SEBOX</name>
    <name type="synonym">OG9X</name>
</gene>
<name>SEBOX_HUMAN</name>
<evidence type="ECO:0000250" key="1"/>
<evidence type="ECO:0000255" key="2">
    <source>
        <dbReference type="PROSITE-ProRule" id="PRU00108"/>
    </source>
</evidence>
<evidence type="ECO:0000256" key="3">
    <source>
        <dbReference type="SAM" id="MobiDB-lite"/>
    </source>
</evidence>
<evidence type="ECO:0000269" key="4">
    <source>
    </source>
</evidence>
<evidence type="ECO:0000269" key="5">
    <source ref="3"/>
</evidence>
<evidence type="ECO:0000305" key="6"/>
<feature type="chain" id="PRO_0000311336" description="Homeobox protein SEBOX">
    <location>
        <begin position="1"/>
        <end position="190"/>
    </location>
</feature>
<feature type="DNA-binding region" description="Homeobox" evidence="2">
    <location>
        <begin position="19"/>
        <end position="78"/>
    </location>
</feature>
<feature type="region of interest" description="Disordered" evidence="3">
    <location>
        <begin position="1"/>
        <end position="24"/>
    </location>
</feature>
<feature type="region of interest" description="Disordered" evidence="3">
    <location>
        <begin position="82"/>
        <end position="161"/>
    </location>
</feature>
<feature type="compositionally biased region" description="Low complexity" evidence="3">
    <location>
        <begin position="1"/>
        <end position="11"/>
    </location>
</feature>
<feature type="compositionally biased region" description="Polar residues" evidence="3">
    <location>
        <begin position="89"/>
        <end position="100"/>
    </location>
</feature>
<feature type="sequence variant" id="VAR_037228" description="In dbSNP:rs9910163." evidence="4 5">
    <original>L</original>
    <variation>S</variation>
    <location>
        <position position="181"/>
    </location>
</feature>
<reference key="1">
    <citation type="journal article" date="2000" name="Proc. Natl. Acad. Sci. U.S.A.">
        <title>Mouse Sebox homeobox gene expression in skin, brain, oocytes, and two-cell embryos.</title>
        <authorList>
            <person name="Cinquanta M."/>
            <person name="Rovescalli A.C."/>
            <person name="Kozak C.A."/>
            <person name="Nirenberg M."/>
        </authorList>
    </citation>
    <scope>NUCLEOTIDE SEQUENCE [GENOMIC DNA]</scope>
    <scope>VARIANT SER-181</scope>
</reference>
<reference key="2">
    <citation type="journal article" date="2006" name="Nature">
        <title>DNA sequence of human chromosome 17 and analysis of rearrangement in the human lineage.</title>
        <authorList>
            <person name="Zody M.C."/>
            <person name="Garber M."/>
            <person name="Adams D.J."/>
            <person name="Sharpe T."/>
            <person name="Harrow J."/>
            <person name="Lupski J.R."/>
            <person name="Nicholson C."/>
            <person name="Searle S.M."/>
            <person name="Wilming L."/>
            <person name="Young S.K."/>
            <person name="Abouelleil A."/>
            <person name="Allen N.R."/>
            <person name="Bi W."/>
            <person name="Bloom T."/>
            <person name="Borowsky M.L."/>
            <person name="Bugalter B.E."/>
            <person name="Butler J."/>
            <person name="Chang J.L."/>
            <person name="Chen C.-K."/>
            <person name="Cook A."/>
            <person name="Corum B."/>
            <person name="Cuomo C.A."/>
            <person name="de Jong P.J."/>
            <person name="DeCaprio D."/>
            <person name="Dewar K."/>
            <person name="FitzGerald M."/>
            <person name="Gilbert J."/>
            <person name="Gibson R."/>
            <person name="Gnerre S."/>
            <person name="Goldstein S."/>
            <person name="Grafham D.V."/>
            <person name="Grocock R."/>
            <person name="Hafez N."/>
            <person name="Hagopian D.S."/>
            <person name="Hart E."/>
            <person name="Norman C.H."/>
            <person name="Humphray S."/>
            <person name="Jaffe D.B."/>
            <person name="Jones M."/>
            <person name="Kamal M."/>
            <person name="Khodiyar V.K."/>
            <person name="LaButti K."/>
            <person name="Laird G."/>
            <person name="Lehoczky J."/>
            <person name="Liu X."/>
            <person name="Lokyitsang T."/>
            <person name="Loveland J."/>
            <person name="Lui A."/>
            <person name="Macdonald P."/>
            <person name="Major J.E."/>
            <person name="Matthews L."/>
            <person name="Mauceli E."/>
            <person name="McCarroll S.A."/>
            <person name="Mihalev A.H."/>
            <person name="Mudge J."/>
            <person name="Nguyen C."/>
            <person name="Nicol R."/>
            <person name="O'Leary S.B."/>
            <person name="Osoegawa K."/>
            <person name="Schwartz D.C."/>
            <person name="Shaw-Smith C."/>
            <person name="Stankiewicz P."/>
            <person name="Steward C."/>
            <person name="Swarbreck D."/>
            <person name="Venkataraman V."/>
            <person name="Whittaker C.A."/>
            <person name="Yang X."/>
            <person name="Zimmer A.R."/>
            <person name="Bradley A."/>
            <person name="Hubbard T."/>
            <person name="Birren B.W."/>
            <person name="Rogers J."/>
            <person name="Lander E.S."/>
            <person name="Nusbaum C."/>
        </authorList>
    </citation>
    <scope>NUCLEOTIDE SEQUENCE [LARGE SCALE GENOMIC DNA]</scope>
</reference>
<reference key="3">
    <citation type="submission" date="2005-09" db="EMBL/GenBank/DDBJ databases">
        <authorList>
            <person name="Mural R.J."/>
            <person name="Istrail S."/>
            <person name="Sutton G.G."/>
            <person name="Florea L."/>
            <person name="Halpern A.L."/>
            <person name="Mobarry C.M."/>
            <person name="Lippert R."/>
            <person name="Walenz B."/>
            <person name="Shatkay H."/>
            <person name="Dew I."/>
            <person name="Miller J.R."/>
            <person name="Flanigan M.J."/>
            <person name="Edwards N.J."/>
            <person name="Bolanos R."/>
            <person name="Fasulo D."/>
            <person name="Halldorsson B.V."/>
            <person name="Hannenhalli S."/>
            <person name="Turner R."/>
            <person name="Yooseph S."/>
            <person name="Lu F."/>
            <person name="Nusskern D.R."/>
            <person name="Shue B.C."/>
            <person name="Zheng X.H."/>
            <person name="Zhong F."/>
            <person name="Delcher A.L."/>
            <person name="Huson D.H."/>
            <person name="Kravitz S.A."/>
            <person name="Mouchard L."/>
            <person name="Reinert K."/>
            <person name="Remington K.A."/>
            <person name="Clark A.G."/>
            <person name="Waterman M.S."/>
            <person name="Eichler E.E."/>
            <person name="Adams M.D."/>
            <person name="Hunkapiller M.W."/>
            <person name="Myers E.W."/>
            <person name="Venter J.C."/>
        </authorList>
    </citation>
    <scope>NUCLEOTIDE SEQUENCE [LARGE SCALE GENOMIC DNA]</scope>
    <scope>VARIANT SER-181</scope>
</reference>
<dbReference type="EMBL" id="AF284337">
    <property type="protein sequence ID" value="AAG14458.1"/>
    <property type="status" value="ALT_INIT"/>
    <property type="molecule type" value="Genomic_DNA"/>
</dbReference>
<dbReference type="EMBL" id="AC002094">
    <property type="status" value="NOT_ANNOTATED_CDS"/>
    <property type="molecule type" value="Genomic_DNA"/>
</dbReference>
<dbReference type="EMBL" id="KF573650">
    <property type="status" value="NOT_ANNOTATED_CDS"/>
    <property type="molecule type" value="Genomic_DNA"/>
</dbReference>
<dbReference type="EMBL" id="CH471159">
    <property type="protein sequence ID" value="EAW51081.1"/>
    <property type="status" value="ALT_INIT"/>
    <property type="molecule type" value="Genomic_DNA"/>
</dbReference>
<dbReference type="CCDS" id="CCDS45634.2"/>
<dbReference type="RefSeq" id="NP_001074306.3">
    <property type="nucleotide sequence ID" value="NM_001080837.4"/>
</dbReference>
<dbReference type="SMR" id="Q9HB31"/>
<dbReference type="FunCoup" id="Q9HB31">
    <property type="interactions" value="23"/>
</dbReference>
<dbReference type="STRING" id="9606.ENSP00000444503"/>
<dbReference type="BioMuta" id="SEBOX"/>
<dbReference type="DMDM" id="322510071"/>
<dbReference type="MassIVE" id="Q9HB31"/>
<dbReference type="PaxDb" id="9606-ENSP00000444503"/>
<dbReference type="Antibodypedia" id="76862">
    <property type="antibodies" value="5 antibodies from 5 providers"/>
</dbReference>
<dbReference type="DNASU" id="645832"/>
<dbReference type="Ensembl" id="ENST00000536498.6">
    <property type="protein sequence ID" value="ENSP00000444503.3"/>
    <property type="gene ID" value="ENSG00000274529.6"/>
</dbReference>
<dbReference type="GeneID" id="645832"/>
<dbReference type="KEGG" id="hsa:645832"/>
<dbReference type="MANE-Select" id="ENST00000536498.6">
    <property type="protein sequence ID" value="ENSP00000444503.3"/>
    <property type="RefSeq nucleotide sequence ID" value="NM_001080837.4"/>
    <property type="RefSeq protein sequence ID" value="NP_001074306.3"/>
</dbReference>
<dbReference type="UCSC" id="uc010wai.1">
    <property type="organism name" value="human"/>
</dbReference>
<dbReference type="AGR" id="HGNC:32942"/>
<dbReference type="CTD" id="645832"/>
<dbReference type="GeneCards" id="SEBOX"/>
<dbReference type="HGNC" id="HGNC:32942">
    <property type="gene designation" value="SEBOX"/>
</dbReference>
<dbReference type="HPA" id="ENSG00000274529">
    <property type="expression patterns" value="Not detected"/>
</dbReference>
<dbReference type="MIM" id="610975">
    <property type="type" value="gene"/>
</dbReference>
<dbReference type="neXtProt" id="NX_Q9HB31"/>
<dbReference type="VEuPathDB" id="HostDB:ENSG00000274529"/>
<dbReference type="eggNOG" id="KOG0490">
    <property type="taxonomic scope" value="Eukaryota"/>
</dbReference>
<dbReference type="GeneTree" id="ENSGT00920000149180"/>
<dbReference type="HOGENOM" id="CLU_080455_0_0_1"/>
<dbReference type="InParanoid" id="Q9HB31"/>
<dbReference type="OMA" id="AFAAWPY"/>
<dbReference type="OrthoDB" id="6159439at2759"/>
<dbReference type="PAN-GO" id="Q9HB31">
    <property type="GO annotations" value="0 GO annotations based on evolutionary models"/>
</dbReference>
<dbReference type="PhylomeDB" id="Q9HB31"/>
<dbReference type="TreeFam" id="TF315976"/>
<dbReference type="BioGRID-ORCS" id="645832">
    <property type="hits" value="15 hits in 1063 CRISPR screens"/>
</dbReference>
<dbReference type="GenomeRNAi" id="645832"/>
<dbReference type="Pharos" id="Q9HB31">
    <property type="development level" value="Tbio"/>
</dbReference>
<dbReference type="PRO" id="PR:Q9HB31"/>
<dbReference type="Proteomes" id="UP000005640">
    <property type="component" value="Chromosome 17"/>
</dbReference>
<dbReference type="RNAct" id="Q9HB31">
    <property type="molecule type" value="protein"/>
</dbReference>
<dbReference type="Bgee" id="ENSG00000274529">
    <property type="expression patterns" value="Expressed in male germ line stem cell (sensu Vertebrata) in testis and 23 other cell types or tissues"/>
</dbReference>
<dbReference type="GO" id="GO:0005634">
    <property type="term" value="C:nucleus"/>
    <property type="evidence" value="ECO:0007669"/>
    <property type="project" value="UniProtKB-SubCell"/>
</dbReference>
<dbReference type="GO" id="GO:0003677">
    <property type="term" value="F:DNA binding"/>
    <property type="evidence" value="ECO:0007669"/>
    <property type="project" value="UniProtKB-KW"/>
</dbReference>
<dbReference type="GO" id="GO:0003700">
    <property type="term" value="F:DNA-binding transcription factor activity"/>
    <property type="evidence" value="ECO:0000303"/>
    <property type="project" value="ARUK-UCL"/>
</dbReference>
<dbReference type="GO" id="GO:0009792">
    <property type="term" value="P:embryo development ending in birth or egg hatching"/>
    <property type="evidence" value="ECO:0007669"/>
    <property type="project" value="Ensembl"/>
</dbReference>
<dbReference type="GO" id="GO:0048477">
    <property type="term" value="P:oogenesis"/>
    <property type="evidence" value="ECO:0007669"/>
    <property type="project" value="Ensembl"/>
</dbReference>
<dbReference type="GO" id="GO:0006357">
    <property type="term" value="P:regulation of transcription by RNA polymerase II"/>
    <property type="evidence" value="ECO:0000303"/>
    <property type="project" value="ARUK-UCL"/>
</dbReference>
<dbReference type="CDD" id="cd00086">
    <property type="entry name" value="homeodomain"/>
    <property type="match status" value="1"/>
</dbReference>
<dbReference type="Gene3D" id="1.10.10.60">
    <property type="entry name" value="Homeodomain-like"/>
    <property type="match status" value="1"/>
</dbReference>
<dbReference type="InterPro" id="IPR001356">
    <property type="entry name" value="HD"/>
</dbReference>
<dbReference type="InterPro" id="IPR009057">
    <property type="entry name" value="Homeodomain-like_sf"/>
</dbReference>
<dbReference type="InterPro" id="IPR042223">
    <property type="entry name" value="SEBOX"/>
</dbReference>
<dbReference type="PANTHER" id="PTHR47777">
    <property type="entry name" value="HOMEOBOX PROTEIN SEBOX"/>
    <property type="match status" value="1"/>
</dbReference>
<dbReference type="PANTHER" id="PTHR47777:SF1">
    <property type="entry name" value="HOMEOBOX PROTEIN SEBOX"/>
    <property type="match status" value="1"/>
</dbReference>
<dbReference type="Pfam" id="PF00046">
    <property type="entry name" value="Homeodomain"/>
    <property type="match status" value="1"/>
</dbReference>
<dbReference type="SMART" id="SM00389">
    <property type="entry name" value="HOX"/>
    <property type="match status" value="1"/>
</dbReference>
<dbReference type="SUPFAM" id="SSF46689">
    <property type="entry name" value="Homeodomain-like"/>
    <property type="match status" value="1"/>
</dbReference>
<dbReference type="PROSITE" id="PS50071">
    <property type="entry name" value="HOMEOBOX_2"/>
    <property type="match status" value="1"/>
</dbReference>
<sequence length="190" mass="20398">MPSPVDASSADGGSGLGSHRRKRTTFSKGQLLELERAFAAWPYPNISTHEHLAWVTCLPEAKVQVWFQKRWAKIIKNRKSGILSPGSECPQSSCSLPDTLQQPWDPQMPGQPPPSSGTPQRTSVCRHSSCPAPGLSPRQGWEGAKAVAPWGSAGASEVHPSLERATPQTSLGSLSDLIYALAIVVNVDHS</sequence>
<accession>Q9HB31</accession>
<accession>F6T8T6</accession>
<keyword id="KW-0217">Developmental protein</keyword>
<keyword id="KW-0221">Differentiation</keyword>
<keyword id="KW-0238">DNA-binding</keyword>
<keyword id="KW-0371">Homeobox</keyword>
<keyword id="KW-0539">Nucleus</keyword>
<keyword id="KW-1185">Reference proteome</keyword>
<keyword id="KW-0804">Transcription</keyword>
<keyword id="KW-0805">Transcription regulation</keyword>
<protein>
    <recommendedName>
        <fullName>Homeobox protein SEBOX</fullName>
    </recommendedName>
    <alternativeName>
        <fullName>Homeobox OG-9</fullName>
    </alternativeName>
    <alternativeName>
        <fullName>Skin-, embryo-, brain- and oocyte-specific homeobox</fullName>
    </alternativeName>
</protein>
<organism>
    <name type="scientific">Homo sapiens</name>
    <name type="common">Human</name>
    <dbReference type="NCBI Taxonomy" id="9606"/>
    <lineage>
        <taxon>Eukaryota</taxon>
        <taxon>Metazoa</taxon>
        <taxon>Chordata</taxon>
        <taxon>Craniata</taxon>
        <taxon>Vertebrata</taxon>
        <taxon>Euteleostomi</taxon>
        <taxon>Mammalia</taxon>
        <taxon>Eutheria</taxon>
        <taxon>Euarchontoglires</taxon>
        <taxon>Primates</taxon>
        <taxon>Haplorrhini</taxon>
        <taxon>Catarrhini</taxon>
        <taxon>Hominidae</taxon>
        <taxon>Homo</taxon>
    </lineage>
</organism>
<comment type="function">
    <text evidence="1">Probable transcription factor involved in the control of specification of mesoderm and endoderm.</text>
</comment>
<comment type="subcellular location">
    <subcellularLocation>
        <location evidence="2">Nucleus</location>
    </subcellularLocation>
</comment>
<comment type="similarity">
    <text evidence="6">Belongs to the paired homeobox family.</text>
</comment>
<comment type="sequence caution" evidence="6">
    <conflict type="erroneous initiation">
        <sequence resource="EMBL-CDS" id="AAG14458"/>
    </conflict>
    <text>Extended N-terminus.</text>
</comment>
<comment type="sequence caution" evidence="6">
    <conflict type="erroneous initiation">
        <sequence resource="EMBL-CDS" id="EAW51081"/>
    </conflict>
    <text>Extended N-terminus.</text>
</comment>
<proteinExistence type="inferred from homology"/>